<organism>
    <name type="scientific">Saccharomyces cerevisiae (strain ATCC 204508 / S288c)</name>
    <name type="common">Baker's yeast</name>
    <dbReference type="NCBI Taxonomy" id="559292"/>
    <lineage>
        <taxon>Eukaryota</taxon>
        <taxon>Fungi</taxon>
        <taxon>Dikarya</taxon>
        <taxon>Ascomycota</taxon>
        <taxon>Saccharomycotina</taxon>
        <taxon>Saccharomycetes</taxon>
        <taxon>Saccharomycetales</taxon>
        <taxon>Saccharomycetaceae</taxon>
        <taxon>Saccharomyces</taxon>
    </lineage>
</organism>
<dbReference type="EMBL" id="U10503">
    <property type="protein sequence ID" value="AAA50552.1"/>
    <property type="molecule type" value="Genomic_DNA"/>
</dbReference>
<dbReference type="EMBL" id="X79151">
    <property type="protein sequence ID" value="CAA55778.1"/>
    <property type="molecule type" value="Genomic_DNA"/>
</dbReference>
<dbReference type="EMBL" id="X76294">
    <property type="protein sequence ID" value="CAA53926.1"/>
    <property type="molecule type" value="Genomic_DNA"/>
</dbReference>
<dbReference type="EMBL" id="Z35938">
    <property type="protein sequence ID" value="CAA85013.1"/>
    <property type="molecule type" value="Genomic_DNA"/>
</dbReference>
<dbReference type="EMBL" id="BK006936">
    <property type="protein sequence ID" value="DAA07188.1"/>
    <property type="molecule type" value="Genomic_DNA"/>
</dbReference>
<dbReference type="PIR" id="S45932">
    <property type="entry name" value="S45932"/>
</dbReference>
<dbReference type="RefSeq" id="NP_009625.1">
    <property type="nucleotide sequence ID" value="NM_001178417.1"/>
</dbReference>
<dbReference type="SMR" id="P38085"/>
<dbReference type="BioGRID" id="32772">
    <property type="interactions" value="118"/>
</dbReference>
<dbReference type="DIP" id="DIP-4912N"/>
<dbReference type="FunCoup" id="P38085">
    <property type="interactions" value="288"/>
</dbReference>
<dbReference type="IntAct" id="P38085">
    <property type="interactions" value="47"/>
</dbReference>
<dbReference type="MINT" id="P38085"/>
<dbReference type="STRING" id="4932.YBR069C"/>
<dbReference type="TCDB" id="2.A.3.10.9">
    <property type="family name" value="the amino acid-polyamine-organocation (apc) family"/>
</dbReference>
<dbReference type="iPTMnet" id="P38085"/>
<dbReference type="SwissPalm" id="P38085"/>
<dbReference type="PaxDb" id="4932-YBR069C"/>
<dbReference type="PeptideAtlas" id="P38085"/>
<dbReference type="EnsemblFungi" id="YBR069C_mRNA">
    <property type="protein sequence ID" value="YBR069C"/>
    <property type="gene ID" value="YBR069C"/>
</dbReference>
<dbReference type="GeneID" id="852361"/>
<dbReference type="KEGG" id="sce:YBR069C"/>
<dbReference type="AGR" id="SGD:S000000273"/>
<dbReference type="SGD" id="S000000273">
    <property type="gene designation" value="TAT1"/>
</dbReference>
<dbReference type="VEuPathDB" id="FungiDB:YBR069C"/>
<dbReference type="eggNOG" id="KOG1286">
    <property type="taxonomic scope" value="Eukaryota"/>
</dbReference>
<dbReference type="HOGENOM" id="CLU_007946_12_0_1"/>
<dbReference type="InParanoid" id="P38085"/>
<dbReference type="OMA" id="VFCYAAF"/>
<dbReference type="OrthoDB" id="3900342at2759"/>
<dbReference type="BioCyc" id="YEAST:G3O-29038-MONOMER"/>
<dbReference type="BioGRID-ORCS" id="852361">
    <property type="hits" value="0 hits in 10 CRISPR screens"/>
</dbReference>
<dbReference type="PRO" id="PR:P38085"/>
<dbReference type="Proteomes" id="UP000002311">
    <property type="component" value="Chromosome II"/>
</dbReference>
<dbReference type="RNAct" id="P38085">
    <property type="molecule type" value="protein"/>
</dbReference>
<dbReference type="GO" id="GO:0071944">
    <property type="term" value="C:cell periphery"/>
    <property type="evidence" value="ECO:0007005"/>
    <property type="project" value="SGD"/>
</dbReference>
<dbReference type="GO" id="GO:0005783">
    <property type="term" value="C:endoplasmic reticulum"/>
    <property type="evidence" value="ECO:0007005"/>
    <property type="project" value="SGD"/>
</dbReference>
<dbReference type="GO" id="GO:0016020">
    <property type="term" value="C:membrane"/>
    <property type="evidence" value="ECO:0000318"/>
    <property type="project" value="GO_Central"/>
</dbReference>
<dbReference type="GO" id="GO:0005886">
    <property type="term" value="C:plasma membrane"/>
    <property type="evidence" value="ECO:0000314"/>
    <property type="project" value="SGD"/>
</dbReference>
<dbReference type="GO" id="GO:0015171">
    <property type="term" value="F:amino acid transmembrane transporter activity"/>
    <property type="evidence" value="ECO:0000314"/>
    <property type="project" value="SGD"/>
</dbReference>
<dbReference type="GO" id="GO:0022893">
    <property type="term" value="F:low-affinity tryptophan transmembrane transporter activity"/>
    <property type="evidence" value="ECO:0000316"/>
    <property type="project" value="SGD"/>
</dbReference>
<dbReference type="GO" id="GO:0003333">
    <property type="term" value="P:amino acid transmembrane transport"/>
    <property type="evidence" value="ECO:0000318"/>
    <property type="project" value="GO_Central"/>
</dbReference>
<dbReference type="GO" id="GO:0006865">
    <property type="term" value="P:amino acid transport"/>
    <property type="evidence" value="ECO:0000314"/>
    <property type="project" value="SGD"/>
</dbReference>
<dbReference type="GO" id="GO:0055085">
    <property type="term" value="P:transmembrane transport"/>
    <property type="evidence" value="ECO:0000314"/>
    <property type="project" value="SGD"/>
</dbReference>
<dbReference type="GO" id="GO:0015827">
    <property type="term" value="P:tryptophan transport"/>
    <property type="evidence" value="ECO:0000316"/>
    <property type="project" value="SGD"/>
</dbReference>
<dbReference type="GO" id="GO:0015828">
    <property type="term" value="P:tyrosine transport"/>
    <property type="evidence" value="ECO:0000315"/>
    <property type="project" value="SGD"/>
</dbReference>
<dbReference type="FunFam" id="1.20.1740.10:FF:000017">
    <property type="entry name" value="Amino acid permease"/>
    <property type="match status" value="1"/>
</dbReference>
<dbReference type="Gene3D" id="1.20.1740.10">
    <property type="entry name" value="Amino acid/polyamine transporter I"/>
    <property type="match status" value="1"/>
</dbReference>
<dbReference type="InterPro" id="IPR004841">
    <property type="entry name" value="AA-permease/SLC12A_dom"/>
</dbReference>
<dbReference type="InterPro" id="IPR004840">
    <property type="entry name" value="Amino_acid_permease_CS"/>
</dbReference>
<dbReference type="InterPro" id="IPR004762">
    <property type="entry name" value="Amino_acid_permease_fungi"/>
</dbReference>
<dbReference type="InterPro" id="IPR050524">
    <property type="entry name" value="APC_YAT"/>
</dbReference>
<dbReference type="NCBIfam" id="TIGR00913">
    <property type="entry name" value="2A0310"/>
    <property type="match status" value="1"/>
</dbReference>
<dbReference type="PANTHER" id="PTHR43341">
    <property type="entry name" value="AMINO ACID PERMEASE"/>
    <property type="match status" value="1"/>
</dbReference>
<dbReference type="PANTHER" id="PTHR43341:SF24">
    <property type="entry name" value="VALINE_TYROSINE_TRYPTOPHAN AMINO-ACID PERMEASE 1"/>
    <property type="match status" value="1"/>
</dbReference>
<dbReference type="Pfam" id="PF00324">
    <property type="entry name" value="AA_permease"/>
    <property type="match status" value="1"/>
</dbReference>
<dbReference type="PIRSF" id="PIRSF006060">
    <property type="entry name" value="AA_transporter"/>
    <property type="match status" value="1"/>
</dbReference>
<dbReference type="PROSITE" id="PS00218">
    <property type="entry name" value="AMINO_ACID_PERMEASE_1"/>
    <property type="match status" value="1"/>
</dbReference>
<evidence type="ECO:0000255" key="1"/>
<evidence type="ECO:0000256" key="2">
    <source>
        <dbReference type="SAM" id="MobiDB-lite"/>
    </source>
</evidence>
<evidence type="ECO:0000269" key="3">
    <source>
    </source>
</evidence>
<evidence type="ECO:0000269" key="4">
    <source>
    </source>
</evidence>
<evidence type="ECO:0000305" key="5"/>
<evidence type="ECO:0007744" key="6">
    <source>
    </source>
</evidence>
<evidence type="ECO:0007744" key="7">
    <source>
    </source>
</evidence>
<evidence type="ECO:0007744" key="8">
    <source>
    </source>
</evidence>
<evidence type="ECO:0007744" key="9">
    <source>
    </source>
</evidence>
<evidence type="ECO:0007744" key="10">
    <source>
    </source>
</evidence>
<feature type="chain" id="PRO_0000054162" description="Valine/tyrosine/tryptophan amino-acid permease 1">
    <location>
        <begin position="1"/>
        <end position="619"/>
    </location>
</feature>
<feature type="topological domain" description="Cytoplasmic" evidence="1">
    <location>
        <begin position="1"/>
        <end position="99"/>
    </location>
</feature>
<feature type="transmembrane region" description="Helical" evidence="1">
    <location>
        <begin position="100"/>
        <end position="120"/>
    </location>
</feature>
<feature type="topological domain" description="Extracellular" evidence="1">
    <location>
        <begin position="121"/>
        <end position="122"/>
    </location>
</feature>
<feature type="transmembrane region" description="Helical" evidence="1">
    <location>
        <begin position="123"/>
        <end position="143"/>
    </location>
</feature>
<feature type="topological domain" description="Cytoplasmic" evidence="1">
    <location>
        <begin position="144"/>
        <end position="172"/>
    </location>
</feature>
<feature type="transmembrane region" description="Helical" evidence="1">
    <location>
        <begin position="173"/>
        <end position="193"/>
    </location>
</feature>
<feature type="topological domain" description="Extracellular" evidence="1">
    <location>
        <begin position="194"/>
        <end position="204"/>
    </location>
</feature>
<feature type="transmembrane region" description="Helical" evidence="1">
    <location>
        <begin position="205"/>
        <end position="225"/>
    </location>
</feature>
<feature type="topological domain" description="Cytoplasmic" evidence="1">
    <location>
        <begin position="226"/>
        <end position="233"/>
    </location>
</feature>
<feature type="transmembrane region" description="Helical" evidence="1">
    <location>
        <begin position="234"/>
        <end position="254"/>
    </location>
</feature>
<feature type="topological domain" description="Extracellular" evidence="1">
    <location>
        <begin position="255"/>
        <end position="281"/>
    </location>
</feature>
<feature type="transmembrane region" description="Helical" evidence="1">
    <location>
        <begin position="282"/>
        <end position="302"/>
    </location>
</feature>
<feature type="topological domain" description="Cytoplasmic" evidence="1">
    <location>
        <begin position="303"/>
        <end position="320"/>
    </location>
</feature>
<feature type="transmembrane region" description="Helical" evidence="1">
    <location>
        <begin position="321"/>
        <end position="341"/>
    </location>
</feature>
<feature type="topological domain" description="Extracellular" evidence="1">
    <location>
        <begin position="342"/>
        <end position="368"/>
    </location>
</feature>
<feature type="transmembrane region" description="Helical" evidence="1">
    <location>
        <begin position="369"/>
        <end position="389"/>
    </location>
</feature>
<feature type="topological domain" description="Cytoplasmic" evidence="1">
    <location>
        <begin position="390"/>
        <end position="422"/>
    </location>
</feature>
<feature type="transmembrane region" description="Helical" evidence="1">
    <location>
        <begin position="423"/>
        <end position="443"/>
    </location>
</feature>
<feature type="topological domain" description="Extracellular" evidence="1">
    <location>
        <begin position="444"/>
        <end position="446"/>
    </location>
</feature>
<feature type="transmembrane region" description="Helical" evidence="1">
    <location>
        <begin position="447"/>
        <end position="467"/>
    </location>
</feature>
<feature type="topological domain" description="Cytoplasmic" evidence="1">
    <location>
        <begin position="468"/>
        <end position="499"/>
    </location>
</feature>
<feature type="transmembrane region" description="Helical" evidence="1">
    <location>
        <begin position="500"/>
        <end position="520"/>
    </location>
</feature>
<feature type="topological domain" description="Extracellular" evidence="1">
    <location>
        <begin position="521"/>
        <end position="529"/>
    </location>
</feature>
<feature type="transmembrane region" description="Helical" evidence="1">
    <location>
        <begin position="530"/>
        <end position="550"/>
    </location>
</feature>
<feature type="topological domain" description="Cytoplasmic" evidence="1">
    <location>
        <begin position="551"/>
        <end position="619"/>
    </location>
</feature>
<feature type="region of interest" description="Disordered" evidence="2">
    <location>
        <begin position="1"/>
        <end position="57"/>
    </location>
</feature>
<feature type="compositionally biased region" description="Basic and acidic residues" evidence="2">
    <location>
        <begin position="20"/>
        <end position="42"/>
    </location>
</feature>
<feature type="modified residue" description="Phosphoserine" evidence="6">
    <location>
        <position position="13"/>
    </location>
</feature>
<feature type="modified residue" description="Phosphoserine" evidence="6">
    <location>
        <position position="80"/>
    </location>
</feature>
<feature type="modified residue" description="Phosphoserine" evidence="6 7 8 9">
    <location>
        <position position="84"/>
    </location>
</feature>
<feature type="cross-link" description="Glycyl lysine isopeptide (Lys-Gly) (interchain with G-Cter in ubiquitin)" evidence="10">
    <location>
        <position position="39"/>
    </location>
</feature>
<keyword id="KW-0029">Amino-acid transport</keyword>
<keyword id="KW-1017">Isopeptide bond</keyword>
<keyword id="KW-0472">Membrane</keyword>
<keyword id="KW-0597">Phosphoprotein</keyword>
<keyword id="KW-1185">Reference proteome</keyword>
<keyword id="KW-0812">Transmembrane</keyword>
<keyword id="KW-1133">Transmembrane helix</keyword>
<keyword id="KW-0813">Transport</keyword>
<keyword id="KW-0832">Ubl conjugation</keyword>
<sequence>MDDSVSFIAKEASPAQYSHSLHERTHSEKQKRDFTITEKQDEVSGQTAEPRRTDSKSILQRKCKEFFDSFKRQLPPDRNSELESQEKNNLTKSIKSRHLVMISLGTGIGTGLLVGNGQVLGTAGPAGLVLGYGIASIMLYCIIQAAGELGLCYAGLTGNYTRYPSILVDPSLGFAVSVVYTIQWLTVLPLQLVTAAMTVKYWTSVNADIFVAVVFVFVIIINLFGSRGYAEAEFIFNSCKILMVIGFVILAIIINCGGAGDRRYIGAEYWHNPGPFAHGFKGVCTVFCYAAFSYGGIEVLLLSAAEQENPTKSIPNACKKVVYRILLIYMLTTILVCFLVPYNSDELLGSSDSSGSHASPFVIAVASHGVKVVPHFINAVILISVISVANSSLYSGPRLLLSLAEQGVLPKCLAYVDRNGRPLLCFFVSLVFGCIGFVATSDAEEQVFTWLLAISSLSQLFIWMSMSLSHIRFRDAMAKQGRSMNEVGYKAQTGYWGSWLAVLIAIFFLVCQFWVAIAPVNEHGKLNVKVFFQNYLAMPIVLFAYFGHKIYFKSWSFWIPAEKIDLDSHRNIFVSPSLTEIDKVDDNDDLKEYENSESSENPNSSRSRKFFKRMTNFWC</sequence>
<comment type="function">
    <text evidence="3">High-affinity transport of valine and tyrosine. Low-affinity transport of tryptophan. Can also transport L-cysteine.</text>
</comment>
<comment type="subcellular location">
    <subcellularLocation>
        <location>Membrane</location>
        <topology>Multi-pass membrane protein</topology>
    </subcellularLocation>
</comment>
<comment type="miscellaneous">
    <text evidence="4">Present with 504 molecules/cell in log phase SD medium.</text>
</comment>
<comment type="similarity">
    <text evidence="5">Belongs to the amino acid-polyamine-organocation (APC) superfamily. YAT (TC 2.A.3.10) family.</text>
</comment>
<protein>
    <recommendedName>
        <fullName>Valine/tyrosine/tryptophan amino-acid permease 1</fullName>
    </recommendedName>
    <alternativeName>
        <fullName>Tyrosine and tryptophan amino acid transporter 1</fullName>
    </alternativeName>
</protein>
<proteinExistence type="evidence at protein level"/>
<accession>P38085</accession>
<accession>D6VQ68</accession>
<gene>
    <name type="primary">TAT1</name>
    <name type="synonym">TAP1</name>
    <name type="synonym">VAP1</name>
    <name type="ordered locus">YBR069C</name>
    <name type="ORF">YBR0710</name>
</gene>
<name>TAT1_YEAST</name>
<reference key="1">
    <citation type="submission" date="1994-06" db="EMBL/GenBank/DDBJ databases">
        <authorList>
            <person name="Andersen H.A."/>
            <person name="Kielland-Brandt M.C."/>
        </authorList>
    </citation>
    <scope>NUCLEOTIDE SEQUENCE [GENOMIC DNA]</scope>
    <source>
        <strain>JH 13-5C</strain>
    </source>
</reference>
<reference key="2">
    <citation type="journal article" date="1994" name="Mol. Cell. Biol.">
        <title>Two FK506 resistance-conferring genes in Saccharomyces cerevisiae, TAT1 and TAT2, encode amino acid permeases mediating tyrosine and tryptophan uptake.</title>
        <authorList>
            <person name="Schmidt A."/>
            <person name="Hall M.N."/>
            <person name="Koller A."/>
        </authorList>
    </citation>
    <scope>NUCLEOTIDE SEQUENCE [GENOMIC DNA]</scope>
    <source>
        <strain>JK9-3D</strain>
    </source>
</reference>
<reference key="3">
    <citation type="journal article" date="1994" name="EMBO J.">
        <title>Complete DNA sequence of yeast chromosome II.</title>
        <authorList>
            <person name="Feldmann H."/>
            <person name="Aigle M."/>
            <person name="Aljinovic G."/>
            <person name="Andre B."/>
            <person name="Baclet M.C."/>
            <person name="Barthe C."/>
            <person name="Baur A."/>
            <person name="Becam A.-M."/>
            <person name="Biteau N."/>
            <person name="Boles E."/>
            <person name="Brandt T."/>
            <person name="Brendel M."/>
            <person name="Brueckner M."/>
            <person name="Bussereau F."/>
            <person name="Christiansen C."/>
            <person name="Contreras R."/>
            <person name="Crouzet M."/>
            <person name="Cziepluch C."/>
            <person name="Demolis N."/>
            <person name="Delaveau T."/>
            <person name="Doignon F."/>
            <person name="Domdey H."/>
            <person name="Duesterhus S."/>
            <person name="Dubois E."/>
            <person name="Dujon B."/>
            <person name="El Bakkoury M."/>
            <person name="Entian K.-D."/>
            <person name="Feuermann M."/>
            <person name="Fiers W."/>
            <person name="Fobo G.M."/>
            <person name="Fritz C."/>
            <person name="Gassenhuber J."/>
            <person name="Glansdorff N."/>
            <person name="Goffeau A."/>
            <person name="Grivell L.A."/>
            <person name="de Haan M."/>
            <person name="Hein C."/>
            <person name="Herbert C.J."/>
            <person name="Hollenberg C.P."/>
            <person name="Holmstroem K."/>
            <person name="Jacq C."/>
            <person name="Jacquet M."/>
            <person name="Jauniaux J.-C."/>
            <person name="Jonniaux J.-L."/>
            <person name="Kallesoee T."/>
            <person name="Kiesau P."/>
            <person name="Kirchrath L."/>
            <person name="Koetter P."/>
            <person name="Korol S."/>
            <person name="Liebl S."/>
            <person name="Logghe M."/>
            <person name="Lohan A.J.E."/>
            <person name="Louis E.J."/>
            <person name="Li Z.Y."/>
            <person name="Maat M.J."/>
            <person name="Mallet L."/>
            <person name="Mannhaupt G."/>
            <person name="Messenguy F."/>
            <person name="Miosga T."/>
            <person name="Molemans F."/>
            <person name="Mueller S."/>
            <person name="Nasr F."/>
            <person name="Obermaier B."/>
            <person name="Perea J."/>
            <person name="Pierard A."/>
            <person name="Piravandi E."/>
            <person name="Pohl F.M."/>
            <person name="Pohl T.M."/>
            <person name="Potier S."/>
            <person name="Proft M."/>
            <person name="Purnelle B."/>
            <person name="Ramezani Rad M."/>
            <person name="Rieger M."/>
            <person name="Rose M."/>
            <person name="Schaaff-Gerstenschlaeger I."/>
            <person name="Scherens B."/>
            <person name="Schwarzlose C."/>
            <person name="Skala J."/>
            <person name="Slonimski P.P."/>
            <person name="Smits P.H.M."/>
            <person name="Souciet J.-L."/>
            <person name="Steensma H.Y."/>
            <person name="Stucka R."/>
            <person name="Urrestarazu L.A."/>
            <person name="van der Aart Q.J.M."/>
            <person name="Van Dyck L."/>
            <person name="Vassarotti A."/>
            <person name="Vetter I."/>
            <person name="Vierendeels F."/>
            <person name="Vissers S."/>
            <person name="Wagner G."/>
            <person name="de Wergifosse P."/>
            <person name="Wolfe K.H."/>
            <person name="Zagulski M."/>
            <person name="Zimmermann F.K."/>
            <person name="Mewes H.-W."/>
            <person name="Kleine K."/>
        </authorList>
    </citation>
    <scope>NUCLEOTIDE SEQUENCE [LARGE SCALE GENOMIC DNA]</scope>
    <source>
        <strain>ATCC 204508 / S288c</strain>
    </source>
</reference>
<reference key="4">
    <citation type="journal article" date="2014" name="G3 (Bethesda)">
        <title>The reference genome sequence of Saccharomyces cerevisiae: Then and now.</title>
        <authorList>
            <person name="Engel S.R."/>
            <person name="Dietrich F.S."/>
            <person name="Fisk D.G."/>
            <person name="Binkley G."/>
            <person name="Balakrishnan R."/>
            <person name="Costanzo M.C."/>
            <person name="Dwight S.S."/>
            <person name="Hitz B.C."/>
            <person name="Karra K."/>
            <person name="Nash R.S."/>
            <person name="Weng S."/>
            <person name="Wong E.D."/>
            <person name="Lloyd P."/>
            <person name="Skrzypek M.S."/>
            <person name="Miyasato S.R."/>
            <person name="Simison M."/>
            <person name="Cherry J.M."/>
        </authorList>
    </citation>
    <scope>GENOME REANNOTATION</scope>
    <source>
        <strain>ATCC 204508 / S288c</strain>
    </source>
</reference>
<reference key="5">
    <citation type="journal article" date="1994" name="Yeast">
        <title>Sequence analysis of a 31 kb DNA fragment from the right arm of Saccharomyces cerevisiae chromosome II.</title>
        <authorList>
            <person name="van der Aart Q.J.M."/>
            <person name="Barthe C."/>
            <person name="Doignon F."/>
            <person name="Aigle M."/>
            <person name="Crouzet M."/>
            <person name="Steensma H.Y."/>
        </authorList>
    </citation>
    <scope>NUCLEOTIDE SEQUENCE [GENOMIC DNA] OF 1-356</scope>
    <source>
        <strain>ATCC 204508 / S288c</strain>
    </source>
</reference>
<reference key="6">
    <citation type="journal article" date="1999" name="Curr. Genet.">
        <title>Cysteine uptake by Saccharomyces cerevisiae is accomplished by multiple permeases.</title>
        <authorList>
            <person name="During-Olsen L."/>
            <person name="Regenberg B."/>
            <person name="Gjermansen C."/>
            <person name="Kielland-Brandt M.C."/>
            <person name="Hansen J."/>
        </authorList>
    </citation>
    <scope>FUNCTION IN L-CYSTEINE UPTAKE</scope>
</reference>
<reference key="7">
    <citation type="journal article" date="2003" name="Nature">
        <title>Global analysis of protein expression in yeast.</title>
        <authorList>
            <person name="Ghaemmaghami S."/>
            <person name="Huh W.-K."/>
            <person name="Bower K."/>
            <person name="Howson R.W."/>
            <person name="Belle A."/>
            <person name="Dephoure N."/>
            <person name="O'Shea E.K."/>
            <person name="Weissman J.S."/>
        </authorList>
    </citation>
    <scope>LEVEL OF PROTEIN EXPRESSION [LARGE SCALE ANALYSIS]</scope>
</reference>
<reference key="8">
    <citation type="journal article" date="2003" name="Proc. Natl. Acad. Sci. U.S.A.">
        <title>A subset of membrane-associated proteins is ubiquitinated in response to mutations in the endoplasmic reticulum degradation machinery.</title>
        <authorList>
            <person name="Hitchcock A.L."/>
            <person name="Auld K."/>
            <person name="Gygi S.P."/>
            <person name="Silver P.A."/>
        </authorList>
    </citation>
    <scope>UBIQUITINATION [LARGE SCALE ANALYSIS] AT LYS-39</scope>
    <scope>IDENTIFICATION BY MASS SPECTROMETRY</scope>
</reference>
<reference key="9">
    <citation type="journal article" date="2006" name="Proc. Natl. Acad. Sci. U.S.A.">
        <title>A global topology map of the Saccharomyces cerevisiae membrane proteome.</title>
        <authorList>
            <person name="Kim H."/>
            <person name="Melen K."/>
            <person name="Oesterberg M."/>
            <person name="von Heijne G."/>
        </authorList>
    </citation>
    <scope>TOPOLOGY [LARGE SCALE ANALYSIS]</scope>
    <source>
        <strain>ATCC 208353 / W303-1A</strain>
    </source>
</reference>
<reference key="10">
    <citation type="journal article" date="2007" name="J. Proteome Res.">
        <title>Large-scale phosphorylation analysis of alpha-factor-arrested Saccharomyces cerevisiae.</title>
        <authorList>
            <person name="Li X."/>
            <person name="Gerber S.A."/>
            <person name="Rudner A.D."/>
            <person name="Beausoleil S.A."/>
            <person name="Haas W."/>
            <person name="Villen J."/>
            <person name="Elias J.E."/>
            <person name="Gygi S.P."/>
        </authorList>
    </citation>
    <scope>PHOSPHORYLATION [LARGE SCALE ANALYSIS] AT SER-84</scope>
    <scope>IDENTIFICATION BY MASS SPECTROMETRY [LARGE SCALE ANALYSIS]</scope>
    <source>
        <strain>ADR376</strain>
    </source>
</reference>
<reference key="11">
    <citation type="journal article" date="2007" name="Proc. Natl. Acad. Sci. U.S.A.">
        <title>Analysis of phosphorylation sites on proteins from Saccharomyces cerevisiae by electron transfer dissociation (ETD) mass spectrometry.</title>
        <authorList>
            <person name="Chi A."/>
            <person name="Huttenhower C."/>
            <person name="Geer L.Y."/>
            <person name="Coon J.J."/>
            <person name="Syka J.E.P."/>
            <person name="Bai D.L."/>
            <person name="Shabanowitz J."/>
            <person name="Burke D.J."/>
            <person name="Troyanskaya O.G."/>
            <person name="Hunt D.F."/>
        </authorList>
    </citation>
    <scope>PHOSPHORYLATION [LARGE SCALE ANALYSIS] AT SER-13; SER-80 AND SER-84</scope>
    <scope>IDENTIFICATION BY MASS SPECTROMETRY [LARGE SCALE ANALYSIS]</scope>
</reference>
<reference key="12">
    <citation type="journal article" date="2008" name="Mol. Cell. Proteomics">
        <title>A multidimensional chromatography technology for in-depth phosphoproteome analysis.</title>
        <authorList>
            <person name="Albuquerque C.P."/>
            <person name="Smolka M.B."/>
            <person name="Payne S.H."/>
            <person name="Bafna V."/>
            <person name="Eng J."/>
            <person name="Zhou H."/>
        </authorList>
    </citation>
    <scope>PHOSPHORYLATION [LARGE SCALE ANALYSIS] AT SER-84</scope>
    <scope>IDENTIFICATION BY MASS SPECTROMETRY [LARGE SCALE ANALYSIS]</scope>
</reference>
<reference key="13">
    <citation type="journal article" date="2009" name="Science">
        <title>Global analysis of Cdk1 substrate phosphorylation sites provides insights into evolution.</title>
        <authorList>
            <person name="Holt L.J."/>
            <person name="Tuch B.B."/>
            <person name="Villen J."/>
            <person name="Johnson A.D."/>
            <person name="Gygi S.P."/>
            <person name="Morgan D.O."/>
        </authorList>
    </citation>
    <scope>PHOSPHORYLATION [LARGE SCALE ANALYSIS] AT SER-84</scope>
    <scope>IDENTIFICATION BY MASS SPECTROMETRY [LARGE SCALE ANALYSIS]</scope>
</reference>
<reference key="14">
    <citation type="journal article" date="2012" name="Proteomics">
        <title>Sites of ubiquitin attachment in Saccharomyces cerevisiae.</title>
        <authorList>
            <person name="Starita L.M."/>
            <person name="Lo R.S."/>
            <person name="Eng J.K."/>
            <person name="von Haller P.D."/>
            <person name="Fields S."/>
        </authorList>
    </citation>
    <scope>UBIQUITINATION [LARGE SCALE ANALYSIS] AT LYS-39</scope>
    <scope>IDENTIFICATION BY MASS SPECTROMETRY [LARGE SCALE ANALYSIS]</scope>
</reference>